<accession>A6QIQ2</accession>
<name>ILVC_STAAE</name>
<organism>
    <name type="scientific">Staphylococcus aureus (strain Newman)</name>
    <dbReference type="NCBI Taxonomy" id="426430"/>
    <lineage>
        <taxon>Bacteria</taxon>
        <taxon>Bacillati</taxon>
        <taxon>Bacillota</taxon>
        <taxon>Bacilli</taxon>
        <taxon>Bacillales</taxon>
        <taxon>Staphylococcaceae</taxon>
        <taxon>Staphylococcus</taxon>
    </lineage>
</organism>
<gene>
    <name evidence="1" type="primary">ilvC</name>
    <name type="ordered locus">NWMN_1962</name>
</gene>
<evidence type="ECO:0000255" key="1">
    <source>
        <dbReference type="HAMAP-Rule" id="MF_00435"/>
    </source>
</evidence>
<evidence type="ECO:0000255" key="2">
    <source>
        <dbReference type="PROSITE-ProRule" id="PRU01197"/>
    </source>
</evidence>
<evidence type="ECO:0000255" key="3">
    <source>
        <dbReference type="PROSITE-ProRule" id="PRU01198"/>
    </source>
</evidence>
<reference key="1">
    <citation type="journal article" date="2008" name="J. Bacteriol.">
        <title>Genome sequence of Staphylococcus aureus strain Newman and comparative analysis of staphylococcal genomes: polymorphism and evolution of two major pathogenicity islands.</title>
        <authorList>
            <person name="Baba T."/>
            <person name="Bae T."/>
            <person name="Schneewind O."/>
            <person name="Takeuchi F."/>
            <person name="Hiramatsu K."/>
        </authorList>
    </citation>
    <scope>NUCLEOTIDE SEQUENCE [LARGE SCALE GENOMIC DNA]</scope>
    <source>
        <strain>Newman</strain>
    </source>
</reference>
<keyword id="KW-0028">Amino-acid biosynthesis</keyword>
<keyword id="KW-0100">Branched-chain amino acid biosynthesis</keyword>
<keyword id="KW-0460">Magnesium</keyword>
<keyword id="KW-0479">Metal-binding</keyword>
<keyword id="KW-0521">NADP</keyword>
<keyword id="KW-0560">Oxidoreductase</keyword>
<protein>
    <recommendedName>
        <fullName evidence="1">Ketol-acid reductoisomerase (NADP(+))</fullName>
        <shortName evidence="1">KARI</shortName>
        <ecNumber evidence="1">1.1.1.86</ecNumber>
    </recommendedName>
    <alternativeName>
        <fullName evidence="1">Acetohydroxy-acid isomeroreductase</fullName>
        <shortName evidence="1">AHIR</shortName>
    </alternativeName>
    <alternativeName>
        <fullName evidence="1">Alpha-keto-beta-hydroxylacyl reductoisomerase</fullName>
    </alternativeName>
    <alternativeName>
        <fullName evidence="1">Ketol-acid reductoisomerase type 1</fullName>
    </alternativeName>
    <alternativeName>
        <fullName evidence="1">Ketol-acid reductoisomerase type I</fullName>
    </alternativeName>
</protein>
<sequence>MTTVYYDQDVKTDALQGKKIAVVGYGSQGHAHAQNLKDNGYDVVIGIRPGRSFDKAKEDGFDVFPVAEAVKQADVIMVLLPDEIQGDVYKNEIEPNLEKHNALAFAHGFNIHFGVIQPPADVDVFLVAPKGPGHLVRRTFVEGSAVPSLFGIQQGASGQARNIALSYAKGIGATRAGVIETTFKEETETDLFGEQAVLCGGVSKLIQSGFETLVEAGYQPELAYFEVLHEMKLIVDLMYEGGMENVRYSISNTAEFGDYVSGPRVITPDVKENMKAVLTDIQNGNFSNRFIEDNKNGFKEFYKLREEQHGHQIEKVGRELREMMPFIKSKSIEK</sequence>
<feature type="chain" id="PRO_1000072326" description="Ketol-acid reductoisomerase (NADP(+))">
    <location>
        <begin position="1"/>
        <end position="334"/>
    </location>
</feature>
<feature type="domain" description="KARI N-terminal Rossmann" evidence="2">
    <location>
        <begin position="1"/>
        <end position="181"/>
    </location>
</feature>
<feature type="domain" description="KARI C-terminal knotted" evidence="3">
    <location>
        <begin position="182"/>
        <end position="327"/>
    </location>
</feature>
<feature type="active site" evidence="1">
    <location>
        <position position="107"/>
    </location>
</feature>
<feature type="binding site" evidence="1">
    <location>
        <begin position="25"/>
        <end position="28"/>
    </location>
    <ligand>
        <name>NADP(+)</name>
        <dbReference type="ChEBI" id="CHEBI:58349"/>
    </ligand>
</feature>
<feature type="binding site" evidence="1">
    <location>
        <position position="48"/>
    </location>
    <ligand>
        <name>NADP(+)</name>
        <dbReference type="ChEBI" id="CHEBI:58349"/>
    </ligand>
</feature>
<feature type="binding site" evidence="1">
    <location>
        <position position="52"/>
    </location>
    <ligand>
        <name>NADP(+)</name>
        <dbReference type="ChEBI" id="CHEBI:58349"/>
    </ligand>
</feature>
<feature type="binding site" evidence="1">
    <location>
        <begin position="82"/>
        <end position="85"/>
    </location>
    <ligand>
        <name>NADP(+)</name>
        <dbReference type="ChEBI" id="CHEBI:58349"/>
    </ligand>
</feature>
<feature type="binding site" evidence="1">
    <location>
        <position position="133"/>
    </location>
    <ligand>
        <name>NADP(+)</name>
        <dbReference type="ChEBI" id="CHEBI:58349"/>
    </ligand>
</feature>
<feature type="binding site" evidence="1">
    <location>
        <position position="190"/>
    </location>
    <ligand>
        <name>Mg(2+)</name>
        <dbReference type="ChEBI" id="CHEBI:18420"/>
        <label>1</label>
    </ligand>
</feature>
<feature type="binding site" evidence="1">
    <location>
        <position position="190"/>
    </location>
    <ligand>
        <name>Mg(2+)</name>
        <dbReference type="ChEBI" id="CHEBI:18420"/>
        <label>2</label>
    </ligand>
</feature>
<feature type="binding site" evidence="1">
    <location>
        <position position="194"/>
    </location>
    <ligand>
        <name>Mg(2+)</name>
        <dbReference type="ChEBI" id="CHEBI:18420"/>
        <label>1</label>
    </ligand>
</feature>
<feature type="binding site" evidence="1">
    <location>
        <position position="226"/>
    </location>
    <ligand>
        <name>Mg(2+)</name>
        <dbReference type="ChEBI" id="CHEBI:18420"/>
        <label>2</label>
    </ligand>
</feature>
<feature type="binding site" evidence="1">
    <location>
        <position position="230"/>
    </location>
    <ligand>
        <name>Mg(2+)</name>
        <dbReference type="ChEBI" id="CHEBI:18420"/>
        <label>2</label>
    </ligand>
</feature>
<feature type="binding site" evidence="1">
    <location>
        <position position="251"/>
    </location>
    <ligand>
        <name>substrate</name>
    </ligand>
</feature>
<proteinExistence type="inferred from homology"/>
<dbReference type="EC" id="1.1.1.86" evidence="1"/>
<dbReference type="EMBL" id="AP009351">
    <property type="protein sequence ID" value="BAF68234.1"/>
    <property type="molecule type" value="Genomic_DNA"/>
</dbReference>
<dbReference type="RefSeq" id="WP_000214557.1">
    <property type="nucleotide sequence ID" value="NZ_JBBIAE010000015.1"/>
</dbReference>
<dbReference type="SMR" id="A6QIQ2"/>
<dbReference type="KEGG" id="sae:NWMN_1962"/>
<dbReference type="HOGENOM" id="CLU_033821_0_1_9"/>
<dbReference type="UniPathway" id="UPA00047">
    <property type="reaction ID" value="UER00056"/>
</dbReference>
<dbReference type="UniPathway" id="UPA00049">
    <property type="reaction ID" value="UER00060"/>
</dbReference>
<dbReference type="Proteomes" id="UP000006386">
    <property type="component" value="Chromosome"/>
</dbReference>
<dbReference type="GO" id="GO:0005829">
    <property type="term" value="C:cytosol"/>
    <property type="evidence" value="ECO:0007669"/>
    <property type="project" value="TreeGrafter"/>
</dbReference>
<dbReference type="GO" id="GO:0004455">
    <property type="term" value="F:ketol-acid reductoisomerase activity"/>
    <property type="evidence" value="ECO:0007669"/>
    <property type="project" value="UniProtKB-UniRule"/>
</dbReference>
<dbReference type="GO" id="GO:0000287">
    <property type="term" value="F:magnesium ion binding"/>
    <property type="evidence" value="ECO:0007669"/>
    <property type="project" value="UniProtKB-UniRule"/>
</dbReference>
<dbReference type="GO" id="GO:0050661">
    <property type="term" value="F:NADP binding"/>
    <property type="evidence" value="ECO:0007669"/>
    <property type="project" value="InterPro"/>
</dbReference>
<dbReference type="GO" id="GO:0009097">
    <property type="term" value="P:isoleucine biosynthetic process"/>
    <property type="evidence" value="ECO:0007669"/>
    <property type="project" value="UniProtKB-UniRule"/>
</dbReference>
<dbReference type="GO" id="GO:0009099">
    <property type="term" value="P:L-valine biosynthetic process"/>
    <property type="evidence" value="ECO:0007669"/>
    <property type="project" value="UniProtKB-UniRule"/>
</dbReference>
<dbReference type="FunFam" id="3.40.50.720:FF:000023">
    <property type="entry name" value="Ketol-acid reductoisomerase (NADP(+))"/>
    <property type="match status" value="1"/>
</dbReference>
<dbReference type="Gene3D" id="6.10.240.10">
    <property type="match status" value="1"/>
</dbReference>
<dbReference type="Gene3D" id="3.40.50.720">
    <property type="entry name" value="NAD(P)-binding Rossmann-like Domain"/>
    <property type="match status" value="1"/>
</dbReference>
<dbReference type="HAMAP" id="MF_00435">
    <property type="entry name" value="IlvC"/>
    <property type="match status" value="1"/>
</dbReference>
<dbReference type="InterPro" id="IPR008927">
    <property type="entry name" value="6-PGluconate_DH-like_C_sf"/>
</dbReference>
<dbReference type="InterPro" id="IPR013023">
    <property type="entry name" value="KARI"/>
</dbReference>
<dbReference type="InterPro" id="IPR000506">
    <property type="entry name" value="KARI_C"/>
</dbReference>
<dbReference type="InterPro" id="IPR013116">
    <property type="entry name" value="KARI_N"/>
</dbReference>
<dbReference type="InterPro" id="IPR014359">
    <property type="entry name" value="KARI_prok"/>
</dbReference>
<dbReference type="InterPro" id="IPR036291">
    <property type="entry name" value="NAD(P)-bd_dom_sf"/>
</dbReference>
<dbReference type="NCBIfam" id="TIGR00465">
    <property type="entry name" value="ilvC"/>
    <property type="match status" value="1"/>
</dbReference>
<dbReference type="NCBIfam" id="NF004017">
    <property type="entry name" value="PRK05479.1"/>
    <property type="match status" value="1"/>
</dbReference>
<dbReference type="NCBIfam" id="NF009940">
    <property type="entry name" value="PRK13403.1"/>
    <property type="match status" value="1"/>
</dbReference>
<dbReference type="PANTHER" id="PTHR21371">
    <property type="entry name" value="KETOL-ACID REDUCTOISOMERASE, MITOCHONDRIAL"/>
    <property type="match status" value="1"/>
</dbReference>
<dbReference type="PANTHER" id="PTHR21371:SF1">
    <property type="entry name" value="KETOL-ACID REDUCTOISOMERASE, MITOCHONDRIAL"/>
    <property type="match status" value="1"/>
</dbReference>
<dbReference type="Pfam" id="PF01450">
    <property type="entry name" value="KARI_C"/>
    <property type="match status" value="1"/>
</dbReference>
<dbReference type="Pfam" id="PF07991">
    <property type="entry name" value="KARI_N"/>
    <property type="match status" value="1"/>
</dbReference>
<dbReference type="PIRSF" id="PIRSF000116">
    <property type="entry name" value="IlvC_gammaproteo"/>
    <property type="match status" value="1"/>
</dbReference>
<dbReference type="SUPFAM" id="SSF48179">
    <property type="entry name" value="6-phosphogluconate dehydrogenase C-terminal domain-like"/>
    <property type="match status" value="1"/>
</dbReference>
<dbReference type="SUPFAM" id="SSF51735">
    <property type="entry name" value="NAD(P)-binding Rossmann-fold domains"/>
    <property type="match status" value="1"/>
</dbReference>
<dbReference type="PROSITE" id="PS51851">
    <property type="entry name" value="KARI_C"/>
    <property type="match status" value="1"/>
</dbReference>
<dbReference type="PROSITE" id="PS51850">
    <property type="entry name" value="KARI_N"/>
    <property type="match status" value="1"/>
</dbReference>
<comment type="function">
    <text evidence="1">Involved in the biosynthesis of branched-chain amino acids (BCAA). Catalyzes an alkyl-migration followed by a ketol-acid reduction of (S)-2-acetolactate (S2AL) to yield (R)-2,3-dihydroxy-isovalerate. In the isomerase reaction, S2AL is rearranged via a Mg-dependent methyl migration to produce 3-hydroxy-3-methyl-2-ketobutyrate (HMKB). In the reductase reaction, this 2-ketoacid undergoes a metal-dependent reduction by NADPH to yield (R)-2,3-dihydroxy-isovalerate.</text>
</comment>
<comment type="catalytic activity">
    <reaction evidence="1">
        <text>(2R)-2,3-dihydroxy-3-methylbutanoate + NADP(+) = (2S)-2-acetolactate + NADPH + H(+)</text>
        <dbReference type="Rhea" id="RHEA:22068"/>
        <dbReference type="ChEBI" id="CHEBI:15378"/>
        <dbReference type="ChEBI" id="CHEBI:49072"/>
        <dbReference type="ChEBI" id="CHEBI:57783"/>
        <dbReference type="ChEBI" id="CHEBI:58349"/>
        <dbReference type="ChEBI" id="CHEBI:58476"/>
        <dbReference type="EC" id="1.1.1.86"/>
    </reaction>
</comment>
<comment type="catalytic activity">
    <reaction evidence="1">
        <text>(2R,3R)-2,3-dihydroxy-3-methylpentanoate + NADP(+) = (S)-2-ethyl-2-hydroxy-3-oxobutanoate + NADPH + H(+)</text>
        <dbReference type="Rhea" id="RHEA:13493"/>
        <dbReference type="ChEBI" id="CHEBI:15378"/>
        <dbReference type="ChEBI" id="CHEBI:49256"/>
        <dbReference type="ChEBI" id="CHEBI:49258"/>
        <dbReference type="ChEBI" id="CHEBI:57783"/>
        <dbReference type="ChEBI" id="CHEBI:58349"/>
        <dbReference type="EC" id="1.1.1.86"/>
    </reaction>
</comment>
<comment type="cofactor">
    <cofactor evidence="1">
        <name>Mg(2+)</name>
        <dbReference type="ChEBI" id="CHEBI:18420"/>
    </cofactor>
    <text evidence="1">Binds 2 magnesium ions per subunit.</text>
</comment>
<comment type="pathway">
    <text evidence="1">Amino-acid biosynthesis; L-isoleucine biosynthesis; L-isoleucine from 2-oxobutanoate: step 2/4.</text>
</comment>
<comment type="pathway">
    <text evidence="1">Amino-acid biosynthesis; L-valine biosynthesis; L-valine from pyruvate: step 2/4.</text>
</comment>
<comment type="similarity">
    <text evidence="1">Belongs to the ketol-acid reductoisomerase family.</text>
</comment>